<protein>
    <recommendedName>
        <fullName evidence="1">Carbamoyl phosphate synthase large chain</fullName>
        <ecNumber evidence="1">6.3.4.16</ecNumber>
        <ecNumber evidence="1">6.3.5.5</ecNumber>
    </recommendedName>
    <alternativeName>
        <fullName evidence="1">Carbamoyl phosphate synthetase ammonia chain</fullName>
    </alternativeName>
</protein>
<reference key="1">
    <citation type="journal article" date="2010" name="Genome Biol.">
        <title>Structure and dynamics of the pan-genome of Streptococcus pneumoniae and closely related species.</title>
        <authorList>
            <person name="Donati C."/>
            <person name="Hiller N.L."/>
            <person name="Tettelin H."/>
            <person name="Muzzi A."/>
            <person name="Croucher N.J."/>
            <person name="Angiuoli S.V."/>
            <person name="Oggioni M."/>
            <person name="Dunning Hotopp J.C."/>
            <person name="Hu F.Z."/>
            <person name="Riley D.R."/>
            <person name="Covacci A."/>
            <person name="Mitchell T.J."/>
            <person name="Bentley S.D."/>
            <person name="Kilian M."/>
            <person name="Ehrlich G.D."/>
            <person name="Rappuoli R."/>
            <person name="Moxon E.R."/>
            <person name="Masignani V."/>
        </authorList>
    </citation>
    <scope>NUCLEOTIDE SEQUENCE [LARGE SCALE GENOMIC DNA]</scope>
    <source>
        <strain>JJA</strain>
    </source>
</reference>
<feature type="chain" id="PRO_1000164719" description="Carbamoyl phosphate synthase large chain">
    <location>
        <begin position="1"/>
        <end position="1058"/>
    </location>
</feature>
<feature type="domain" description="ATP-grasp 1" evidence="1">
    <location>
        <begin position="133"/>
        <end position="327"/>
    </location>
</feature>
<feature type="domain" description="ATP-grasp 2" evidence="1">
    <location>
        <begin position="671"/>
        <end position="861"/>
    </location>
</feature>
<feature type="domain" description="MGS-like" evidence="1">
    <location>
        <begin position="930"/>
        <end position="1058"/>
    </location>
</feature>
<feature type="region of interest" description="Carboxyphosphate synthetic domain" evidence="1">
    <location>
        <begin position="1"/>
        <end position="401"/>
    </location>
</feature>
<feature type="region of interest" description="Oligomerization domain" evidence="1">
    <location>
        <begin position="402"/>
        <end position="546"/>
    </location>
</feature>
<feature type="region of interest" description="Carbamoyl phosphate synthetic domain" evidence="1">
    <location>
        <begin position="547"/>
        <end position="929"/>
    </location>
</feature>
<feature type="region of interest" description="Allosteric domain" evidence="1">
    <location>
        <begin position="930"/>
        <end position="1058"/>
    </location>
</feature>
<feature type="binding site" evidence="1">
    <location>
        <position position="129"/>
    </location>
    <ligand>
        <name>ATP</name>
        <dbReference type="ChEBI" id="CHEBI:30616"/>
        <label>1</label>
    </ligand>
</feature>
<feature type="binding site" evidence="1">
    <location>
        <position position="169"/>
    </location>
    <ligand>
        <name>ATP</name>
        <dbReference type="ChEBI" id="CHEBI:30616"/>
        <label>1</label>
    </ligand>
</feature>
<feature type="binding site" evidence="1">
    <location>
        <position position="175"/>
    </location>
    <ligand>
        <name>ATP</name>
        <dbReference type="ChEBI" id="CHEBI:30616"/>
        <label>1</label>
    </ligand>
</feature>
<feature type="binding site" evidence="1">
    <location>
        <position position="176"/>
    </location>
    <ligand>
        <name>ATP</name>
        <dbReference type="ChEBI" id="CHEBI:30616"/>
        <label>1</label>
    </ligand>
</feature>
<feature type="binding site" evidence="1">
    <location>
        <position position="208"/>
    </location>
    <ligand>
        <name>ATP</name>
        <dbReference type="ChEBI" id="CHEBI:30616"/>
        <label>1</label>
    </ligand>
</feature>
<feature type="binding site" evidence="1">
    <location>
        <position position="210"/>
    </location>
    <ligand>
        <name>ATP</name>
        <dbReference type="ChEBI" id="CHEBI:30616"/>
        <label>1</label>
    </ligand>
</feature>
<feature type="binding site" evidence="1">
    <location>
        <position position="215"/>
    </location>
    <ligand>
        <name>ATP</name>
        <dbReference type="ChEBI" id="CHEBI:30616"/>
        <label>1</label>
    </ligand>
</feature>
<feature type="binding site" evidence="1">
    <location>
        <position position="241"/>
    </location>
    <ligand>
        <name>ATP</name>
        <dbReference type="ChEBI" id="CHEBI:30616"/>
        <label>1</label>
    </ligand>
</feature>
<feature type="binding site" evidence="1">
    <location>
        <position position="242"/>
    </location>
    <ligand>
        <name>ATP</name>
        <dbReference type="ChEBI" id="CHEBI:30616"/>
        <label>1</label>
    </ligand>
</feature>
<feature type="binding site" evidence="1">
    <location>
        <position position="243"/>
    </location>
    <ligand>
        <name>ATP</name>
        <dbReference type="ChEBI" id="CHEBI:30616"/>
        <label>1</label>
    </ligand>
</feature>
<feature type="binding site" evidence="1">
    <location>
        <position position="284"/>
    </location>
    <ligand>
        <name>ATP</name>
        <dbReference type="ChEBI" id="CHEBI:30616"/>
        <label>1</label>
    </ligand>
</feature>
<feature type="binding site" evidence="1">
    <location>
        <position position="284"/>
    </location>
    <ligand>
        <name>Mg(2+)</name>
        <dbReference type="ChEBI" id="CHEBI:18420"/>
        <label>1</label>
    </ligand>
</feature>
<feature type="binding site" evidence="1">
    <location>
        <position position="284"/>
    </location>
    <ligand>
        <name>Mn(2+)</name>
        <dbReference type="ChEBI" id="CHEBI:29035"/>
        <label>1</label>
    </ligand>
</feature>
<feature type="binding site" evidence="1">
    <location>
        <position position="298"/>
    </location>
    <ligand>
        <name>ATP</name>
        <dbReference type="ChEBI" id="CHEBI:30616"/>
        <label>1</label>
    </ligand>
</feature>
<feature type="binding site" evidence="1">
    <location>
        <position position="298"/>
    </location>
    <ligand>
        <name>Mg(2+)</name>
        <dbReference type="ChEBI" id="CHEBI:18420"/>
        <label>1</label>
    </ligand>
</feature>
<feature type="binding site" evidence="1">
    <location>
        <position position="298"/>
    </location>
    <ligand>
        <name>Mg(2+)</name>
        <dbReference type="ChEBI" id="CHEBI:18420"/>
        <label>2</label>
    </ligand>
</feature>
<feature type="binding site" evidence="1">
    <location>
        <position position="298"/>
    </location>
    <ligand>
        <name>Mn(2+)</name>
        <dbReference type="ChEBI" id="CHEBI:29035"/>
        <label>1</label>
    </ligand>
</feature>
<feature type="binding site" evidence="1">
    <location>
        <position position="298"/>
    </location>
    <ligand>
        <name>Mn(2+)</name>
        <dbReference type="ChEBI" id="CHEBI:29035"/>
        <label>2</label>
    </ligand>
</feature>
<feature type="binding site" evidence="1">
    <location>
        <position position="300"/>
    </location>
    <ligand>
        <name>Mg(2+)</name>
        <dbReference type="ChEBI" id="CHEBI:18420"/>
        <label>2</label>
    </ligand>
</feature>
<feature type="binding site" evidence="1">
    <location>
        <position position="300"/>
    </location>
    <ligand>
        <name>Mn(2+)</name>
        <dbReference type="ChEBI" id="CHEBI:29035"/>
        <label>2</label>
    </ligand>
</feature>
<feature type="binding site" evidence="1">
    <location>
        <position position="707"/>
    </location>
    <ligand>
        <name>ATP</name>
        <dbReference type="ChEBI" id="CHEBI:30616"/>
        <label>2</label>
    </ligand>
</feature>
<feature type="binding site" evidence="1">
    <location>
        <position position="746"/>
    </location>
    <ligand>
        <name>ATP</name>
        <dbReference type="ChEBI" id="CHEBI:30616"/>
        <label>2</label>
    </ligand>
</feature>
<feature type="binding site" evidence="1">
    <location>
        <position position="748"/>
    </location>
    <ligand>
        <name>ATP</name>
        <dbReference type="ChEBI" id="CHEBI:30616"/>
        <label>2</label>
    </ligand>
</feature>
<feature type="binding site" evidence="1">
    <location>
        <position position="752"/>
    </location>
    <ligand>
        <name>ATP</name>
        <dbReference type="ChEBI" id="CHEBI:30616"/>
        <label>2</label>
    </ligand>
</feature>
<feature type="binding site" evidence="1">
    <location>
        <position position="777"/>
    </location>
    <ligand>
        <name>ATP</name>
        <dbReference type="ChEBI" id="CHEBI:30616"/>
        <label>2</label>
    </ligand>
</feature>
<feature type="binding site" evidence="1">
    <location>
        <position position="778"/>
    </location>
    <ligand>
        <name>ATP</name>
        <dbReference type="ChEBI" id="CHEBI:30616"/>
        <label>2</label>
    </ligand>
</feature>
<feature type="binding site" evidence="1">
    <location>
        <position position="779"/>
    </location>
    <ligand>
        <name>ATP</name>
        <dbReference type="ChEBI" id="CHEBI:30616"/>
        <label>2</label>
    </ligand>
</feature>
<feature type="binding site" evidence="1">
    <location>
        <position position="780"/>
    </location>
    <ligand>
        <name>ATP</name>
        <dbReference type="ChEBI" id="CHEBI:30616"/>
        <label>2</label>
    </ligand>
</feature>
<feature type="binding site" evidence="1">
    <location>
        <position position="820"/>
    </location>
    <ligand>
        <name>ATP</name>
        <dbReference type="ChEBI" id="CHEBI:30616"/>
        <label>2</label>
    </ligand>
</feature>
<feature type="binding site" evidence="1">
    <location>
        <position position="820"/>
    </location>
    <ligand>
        <name>Mg(2+)</name>
        <dbReference type="ChEBI" id="CHEBI:18420"/>
        <label>3</label>
    </ligand>
</feature>
<feature type="binding site" evidence="1">
    <location>
        <position position="820"/>
    </location>
    <ligand>
        <name>Mn(2+)</name>
        <dbReference type="ChEBI" id="CHEBI:29035"/>
        <label>3</label>
    </ligand>
</feature>
<feature type="binding site" evidence="1">
    <location>
        <position position="832"/>
    </location>
    <ligand>
        <name>ATP</name>
        <dbReference type="ChEBI" id="CHEBI:30616"/>
        <label>2</label>
    </ligand>
</feature>
<feature type="binding site" evidence="1">
    <location>
        <position position="832"/>
    </location>
    <ligand>
        <name>Mg(2+)</name>
        <dbReference type="ChEBI" id="CHEBI:18420"/>
        <label>3</label>
    </ligand>
</feature>
<feature type="binding site" evidence="1">
    <location>
        <position position="832"/>
    </location>
    <ligand>
        <name>Mg(2+)</name>
        <dbReference type="ChEBI" id="CHEBI:18420"/>
        <label>4</label>
    </ligand>
</feature>
<feature type="binding site" evidence="1">
    <location>
        <position position="832"/>
    </location>
    <ligand>
        <name>Mn(2+)</name>
        <dbReference type="ChEBI" id="CHEBI:29035"/>
        <label>3</label>
    </ligand>
</feature>
<feature type="binding site" evidence="1">
    <location>
        <position position="832"/>
    </location>
    <ligand>
        <name>Mn(2+)</name>
        <dbReference type="ChEBI" id="CHEBI:29035"/>
        <label>4</label>
    </ligand>
</feature>
<feature type="binding site" evidence="1">
    <location>
        <position position="834"/>
    </location>
    <ligand>
        <name>Mg(2+)</name>
        <dbReference type="ChEBI" id="CHEBI:18420"/>
        <label>4</label>
    </ligand>
</feature>
<feature type="binding site" evidence="1">
    <location>
        <position position="834"/>
    </location>
    <ligand>
        <name>Mn(2+)</name>
        <dbReference type="ChEBI" id="CHEBI:29035"/>
        <label>4</label>
    </ligand>
</feature>
<comment type="function">
    <text evidence="1">Large subunit of the glutamine-dependent carbamoyl phosphate synthetase (CPSase). CPSase catalyzes the formation of carbamoyl phosphate from the ammonia moiety of glutamine, carbonate, and phosphate donated by ATP, constituting the first step of 2 biosynthetic pathways, one leading to arginine and/or urea and the other to pyrimidine nucleotides. The large subunit (synthetase) binds the substrates ammonia (free or transferred from glutamine from the small subunit), hydrogencarbonate and ATP and carries out an ATP-coupled ligase reaction, activating hydrogencarbonate by forming carboxy phosphate which reacts with ammonia to form carbamoyl phosphate.</text>
</comment>
<comment type="catalytic activity">
    <reaction evidence="1">
        <text>hydrogencarbonate + L-glutamine + 2 ATP + H2O = carbamoyl phosphate + L-glutamate + 2 ADP + phosphate + 2 H(+)</text>
        <dbReference type="Rhea" id="RHEA:18633"/>
        <dbReference type="ChEBI" id="CHEBI:15377"/>
        <dbReference type="ChEBI" id="CHEBI:15378"/>
        <dbReference type="ChEBI" id="CHEBI:17544"/>
        <dbReference type="ChEBI" id="CHEBI:29985"/>
        <dbReference type="ChEBI" id="CHEBI:30616"/>
        <dbReference type="ChEBI" id="CHEBI:43474"/>
        <dbReference type="ChEBI" id="CHEBI:58228"/>
        <dbReference type="ChEBI" id="CHEBI:58359"/>
        <dbReference type="ChEBI" id="CHEBI:456216"/>
        <dbReference type="EC" id="6.3.5.5"/>
    </reaction>
</comment>
<comment type="catalytic activity">
    <molecule>Carbamoyl phosphate synthase large chain</molecule>
    <reaction evidence="1">
        <text>hydrogencarbonate + NH4(+) + 2 ATP = carbamoyl phosphate + 2 ADP + phosphate + 2 H(+)</text>
        <dbReference type="Rhea" id="RHEA:18029"/>
        <dbReference type="ChEBI" id="CHEBI:15378"/>
        <dbReference type="ChEBI" id="CHEBI:17544"/>
        <dbReference type="ChEBI" id="CHEBI:28938"/>
        <dbReference type="ChEBI" id="CHEBI:30616"/>
        <dbReference type="ChEBI" id="CHEBI:43474"/>
        <dbReference type="ChEBI" id="CHEBI:58228"/>
        <dbReference type="ChEBI" id="CHEBI:456216"/>
        <dbReference type="EC" id="6.3.4.16"/>
    </reaction>
</comment>
<comment type="cofactor">
    <cofactor evidence="1">
        <name>Mg(2+)</name>
        <dbReference type="ChEBI" id="CHEBI:18420"/>
    </cofactor>
    <cofactor evidence="1">
        <name>Mn(2+)</name>
        <dbReference type="ChEBI" id="CHEBI:29035"/>
    </cofactor>
    <text evidence="1">Binds 4 Mg(2+) or Mn(2+) ions per subunit.</text>
</comment>
<comment type="pathway">
    <text evidence="1">Amino-acid biosynthesis; L-arginine biosynthesis; carbamoyl phosphate from bicarbonate: step 1/1.</text>
</comment>
<comment type="pathway">
    <text evidence="1">Pyrimidine metabolism; UMP biosynthesis via de novo pathway; (S)-dihydroorotate from bicarbonate: step 1/3.</text>
</comment>
<comment type="subunit">
    <text evidence="1">Composed of two chains; the small (or glutamine) chain promotes the hydrolysis of glutamine to ammonia, which is used by the large (or ammonia) chain to synthesize carbamoyl phosphate. Tetramer of heterodimers (alpha,beta)4.</text>
</comment>
<comment type="domain">
    <text evidence="1">The large subunit is composed of 2 ATP-grasp domains that are involved in binding the 2 ATP molecules needed for carbamoyl phosphate synthesis. The N-terminal ATP-grasp domain (referred to as the carboxyphosphate synthetic component) catalyzes the ATP-dependent phosphorylation of hydrogencarbonate to carboxyphosphate and the subsequent nucleophilic attack by ammonia to form a carbamate intermediate. The C-terminal ATP-grasp domain (referred to as the carbamoyl phosphate synthetic component) then catalyzes the phosphorylation of carbamate with the second ATP to form the end product carbamoyl phosphate. The reactive and unstable enzyme intermediates are sequentially channeled from one active site to the next through the interior of the protein over a distance of at least 96 A.</text>
</comment>
<comment type="similarity">
    <text evidence="1">Belongs to the CarB family.</text>
</comment>
<name>CARB_STRZJ</name>
<gene>
    <name evidence="1" type="primary">carB</name>
    <name type="ordered locus">SPJ_1189</name>
</gene>
<dbReference type="EC" id="6.3.4.16" evidence="1"/>
<dbReference type="EC" id="6.3.5.5" evidence="1"/>
<dbReference type="EMBL" id="CP000919">
    <property type="protein sequence ID" value="ACO20030.1"/>
    <property type="molecule type" value="Genomic_DNA"/>
</dbReference>
<dbReference type="RefSeq" id="WP_001126425.1">
    <property type="nucleotide sequence ID" value="NC_012466.1"/>
</dbReference>
<dbReference type="SMR" id="C1CEM9"/>
<dbReference type="KEGG" id="sjj:SPJ_1189"/>
<dbReference type="HOGENOM" id="CLU_000513_1_2_9"/>
<dbReference type="UniPathway" id="UPA00068">
    <property type="reaction ID" value="UER00171"/>
</dbReference>
<dbReference type="UniPathway" id="UPA00070">
    <property type="reaction ID" value="UER00115"/>
</dbReference>
<dbReference type="Proteomes" id="UP000002206">
    <property type="component" value="Chromosome"/>
</dbReference>
<dbReference type="GO" id="GO:0005737">
    <property type="term" value="C:cytoplasm"/>
    <property type="evidence" value="ECO:0007669"/>
    <property type="project" value="TreeGrafter"/>
</dbReference>
<dbReference type="GO" id="GO:0005524">
    <property type="term" value="F:ATP binding"/>
    <property type="evidence" value="ECO:0007669"/>
    <property type="project" value="UniProtKB-UniRule"/>
</dbReference>
<dbReference type="GO" id="GO:0004087">
    <property type="term" value="F:carbamoyl-phosphate synthase (ammonia) activity"/>
    <property type="evidence" value="ECO:0007669"/>
    <property type="project" value="RHEA"/>
</dbReference>
<dbReference type="GO" id="GO:0004088">
    <property type="term" value="F:carbamoyl-phosphate synthase (glutamine-hydrolyzing) activity"/>
    <property type="evidence" value="ECO:0007669"/>
    <property type="project" value="UniProtKB-UniRule"/>
</dbReference>
<dbReference type="GO" id="GO:0046872">
    <property type="term" value="F:metal ion binding"/>
    <property type="evidence" value="ECO:0007669"/>
    <property type="project" value="UniProtKB-KW"/>
</dbReference>
<dbReference type="GO" id="GO:0044205">
    <property type="term" value="P:'de novo' UMP biosynthetic process"/>
    <property type="evidence" value="ECO:0007669"/>
    <property type="project" value="UniProtKB-UniRule"/>
</dbReference>
<dbReference type="GO" id="GO:0006541">
    <property type="term" value="P:glutamine metabolic process"/>
    <property type="evidence" value="ECO:0007669"/>
    <property type="project" value="TreeGrafter"/>
</dbReference>
<dbReference type="GO" id="GO:0006526">
    <property type="term" value="P:L-arginine biosynthetic process"/>
    <property type="evidence" value="ECO:0007669"/>
    <property type="project" value="UniProtKB-UniRule"/>
</dbReference>
<dbReference type="CDD" id="cd01424">
    <property type="entry name" value="MGS_CPS_II"/>
    <property type="match status" value="1"/>
</dbReference>
<dbReference type="FunFam" id="1.10.1030.10:FF:000002">
    <property type="entry name" value="Carbamoyl-phosphate synthase large chain"/>
    <property type="match status" value="1"/>
</dbReference>
<dbReference type="FunFam" id="3.30.1490.20:FF:000001">
    <property type="entry name" value="Carbamoyl-phosphate synthase large chain"/>
    <property type="match status" value="1"/>
</dbReference>
<dbReference type="FunFam" id="3.30.470.20:FF:000001">
    <property type="entry name" value="Carbamoyl-phosphate synthase large chain"/>
    <property type="match status" value="1"/>
</dbReference>
<dbReference type="FunFam" id="3.30.470.20:FF:000026">
    <property type="entry name" value="Carbamoyl-phosphate synthase large chain"/>
    <property type="match status" value="1"/>
</dbReference>
<dbReference type="FunFam" id="3.40.50.1380:FF:000017">
    <property type="entry name" value="Carbamoyl-phosphate synthase large chain"/>
    <property type="match status" value="1"/>
</dbReference>
<dbReference type="FunFam" id="3.40.50.20:FF:000001">
    <property type="entry name" value="Carbamoyl-phosphate synthase large chain"/>
    <property type="match status" value="2"/>
</dbReference>
<dbReference type="Gene3D" id="3.40.50.20">
    <property type="match status" value="2"/>
</dbReference>
<dbReference type="Gene3D" id="3.30.1490.20">
    <property type="entry name" value="ATP-grasp fold, A domain"/>
    <property type="match status" value="1"/>
</dbReference>
<dbReference type="Gene3D" id="3.30.470.20">
    <property type="entry name" value="ATP-grasp fold, B domain"/>
    <property type="match status" value="2"/>
</dbReference>
<dbReference type="Gene3D" id="1.10.1030.10">
    <property type="entry name" value="Carbamoyl-phosphate synthetase, large subunit oligomerisation domain"/>
    <property type="match status" value="1"/>
</dbReference>
<dbReference type="Gene3D" id="3.40.50.1380">
    <property type="entry name" value="Methylglyoxal synthase-like domain"/>
    <property type="match status" value="1"/>
</dbReference>
<dbReference type="HAMAP" id="MF_01210_A">
    <property type="entry name" value="CPSase_L_chain_A"/>
    <property type="match status" value="1"/>
</dbReference>
<dbReference type="HAMAP" id="MF_01210_B">
    <property type="entry name" value="CPSase_L_chain_B"/>
    <property type="match status" value="1"/>
</dbReference>
<dbReference type="InterPro" id="IPR011761">
    <property type="entry name" value="ATP-grasp"/>
</dbReference>
<dbReference type="InterPro" id="IPR013815">
    <property type="entry name" value="ATP_grasp_subdomain_1"/>
</dbReference>
<dbReference type="InterPro" id="IPR006275">
    <property type="entry name" value="CarbamoylP_synth_lsu"/>
</dbReference>
<dbReference type="InterPro" id="IPR005480">
    <property type="entry name" value="CarbamoylP_synth_lsu_oligo"/>
</dbReference>
<dbReference type="InterPro" id="IPR036897">
    <property type="entry name" value="CarbamoylP_synth_lsu_oligo_sf"/>
</dbReference>
<dbReference type="InterPro" id="IPR005479">
    <property type="entry name" value="CbamoylP_synth_lsu-like_ATP-bd"/>
</dbReference>
<dbReference type="InterPro" id="IPR005483">
    <property type="entry name" value="CbamoylP_synth_lsu_CPSase_dom"/>
</dbReference>
<dbReference type="InterPro" id="IPR011607">
    <property type="entry name" value="MGS-like_dom"/>
</dbReference>
<dbReference type="InterPro" id="IPR036914">
    <property type="entry name" value="MGS-like_dom_sf"/>
</dbReference>
<dbReference type="InterPro" id="IPR033937">
    <property type="entry name" value="MGS_CPS_CarB"/>
</dbReference>
<dbReference type="InterPro" id="IPR016185">
    <property type="entry name" value="PreATP-grasp_dom_sf"/>
</dbReference>
<dbReference type="NCBIfam" id="TIGR01369">
    <property type="entry name" value="CPSaseII_lrg"/>
    <property type="match status" value="1"/>
</dbReference>
<dbReference type="NCBIfam" id="NF003671">
    <property type="entry name" value="PRK05294.1"/>
    <property type="match status" value="1"/>
</dbReference>
<dbReference type="NCBIfam" id="NF009455">
    <property type="entry name" value="PRK12815.1"/>
    <property type="match status" value="1"/>
</dbReference>
<dbReference type="PANTHER" id="PTHR11405:SF53">
    <property type="entry name" value="CARBAMOYL-PHOSPHATE SYNTHASE [AMMONIA], MITOCHONDRIAL"/>
    <property type="match status" value="1"/>
</dbReference>
<dbReference type="PANTHER" id="PTHR11405">
    <property type="entry name" value="CARBAMOYLTRANSFERASE FAMILY MEMBER"/>
    <property type="match status" value="1"/>
</dbReference>
<dbReference type="Pfam" id="PF02786">
    <property type="entry name" value="CPSase_L_D2"/>
    <property type="match status" value="2"/>
</dbReference>
<dbReference type="Pfam" id="PF02787">
    <property type="entry name" value="CPSase_L_D3"/>
    <property type="match status" value="1"/>
</dbReference>
<dbReference type="Pfam" id="PF02142">
    <property type="entry name" value="MGS"/>
    <property type="match status" value="1"/>
</dbReference>
<dbReference type="PRINTS" id="PR00098">
    <property type="entry name" value="CPSASE"/>
</dbReference>
<dbReference type="SMART" id="SM01096">
    <property type="entry name" value="CPSase_L_D3"/>
    <property type="match status" value="1"/>
</dbReference>
<dbReference type="SMART" id="SM01209">
    <property type="entry name" value="GARS_A"/>
    <property type="match status" value="1"/>
</dbReference>
<dbReference type="SMART" id="SM00851">
    <property type="entry name" value="MGS"/>
    <property type="match status" value="1"/>
</dbReference>
<dbReference type="SUPFAM" id="SSF48108">
    <property type="entry name" value="Carbamoyl phosphate synthetase, large subunit connection domain"/>
    <property type="match status" value="1"/>
</dbReference>
<dbReference type="SUPFAM" id="SSF56059">
    <property type="entry name" value="Glutathione synthetase ATP-binding domain-like"/>
    <property type="match status" value="2"/>
</dbReference>
<dbReference type="SUPFAM" id="SSF52335">
    <property type="entry name" value="Methylglyoxal synthase-like"/>
    <property type="match status" value="1"/>
</dbReference>
<dbReference type="SUPFAM" id="SSF52440">
    <property type="entry name" value="PreATP-grasp domain"/>
    <property type="match status" value="2"/>
</dbReference>
<dbReference type="PROSITE" id="PS50975">
    <property type="entry name" value="ATP_GRASP"/>
    <property type="match status" value="2"/>
</dbReference>
<dbReference type="PROSITE" id="PS00866">
    <property type="entry name" value="CPSASE_1"/>
    <property type="match status" value="2"/>
</dbReference>
<dbReference type="PROSITE" id="PS00867">
    <property type="entry name" value="CPSASE_2"/>
    <property type="match status" value="2"/>
</dbReference>
<dbReference type="PROSITE" id="PS51855">
    <property type="entry name" value="MGS"/>
    <property type="match status" value="1"/>
</dbReference>
<keyword id="KW-0028">Amino-acid biosynthesis</keyword>
<keyword id="KW-0055">Arginine biosynthesis</keyword>
<keyword id="KW-0067">ATP-binding</keyword>
<keyword id="KW-0436">Ligase</keyword>
<keyword id="KW-0460">Magnesium</keyword>
<keyword id="KW-0464">Manganese</keyword>
<keyword id="KW-0479">Metal-binding</keyword>
<keyword id="KW-0547">Nucleotide-binding</keyword>
<keyword id="KW-0665">Pyrimidine biosynthesis</keyword>
<keyword id="KW-0677">Repeat</keyword>
<accession>C1CEM9</accession>
<organism>
    <name type="scientific">Streptococcus pneumoniae (strain JJA)</name>
    <dbReference type="NCBI Taxonomy" id="488222"/>
    <lineage>
        <taxon>Bacteria</taxon>
        <taxon>Bacillati</taxon>
        <taxon>Bacillota</taxon>
        <taxon>Bacilli</taxon>
        <taxon>Lactobacillales</taxon>
        <taxon>Streptococcaceae</taxon>
        <taxon>Streptococcus</taxon>
    </lineage>
</organism>
<sequence length="1058" mass="116159">MPKRTDIQKIMVIGSGPIIIGQAAEFDYAGTQACLSLKEEGYEVVLVNSNPATIMTDKEIADKVYIEPITLEFVTRILRKERPDALLPTLGGQTGLNMAMELSKNGILDELGVELLGTKLSAIDQAEDRDLFKQLMEELEQPIPESEIVNTVEEAVAFAATIGYPVIVRPAFTLGGTGGGMCANEKELREITENGLKLSPVTQCLIERSIAGFKEIEYEVMRDSADNALVVCNMENFDPVGIHTGDSIVFAPAQTMSDYENQMLRDASLSIIRALKIEGGCNVQLALDPNSFKYYVIEVNPRVSRSSALASKATGYPIAKLAAKIAVGLTLDEVINPVTGSTYAMFEPALDYVVAKIPRFPFDKFEKGERRLGTQMKATGEVMAIGRNIEESLLKACRSLEIGVHHNEIPELAAVSDDALIEKVVKAQDDRLFYVSEAIRRGYTPEEIAELTKIDIFYLDKLLHIFEIEQELGAHPQDLEVLKTAKLNGFSDRKIAELWGTTDDQVRQLRLENKIVPVYKMVDTCAAEFDSETPYFYSTYGWENESIRSDKESVLVLGSGPIRIGQGVEFDYATVHSVKAIQAAGYEAIIMNSNPETVSTDFSVSDKLYFEPLTFEDVMNVIDLEQPKGVIVQFGGQTAINLAEPLAKAGVTILGTQVADLDRAEDRDLFEQALKELDIPQPPGQTATNEEEAALAARKIGFPVLVRPSYVLGGRAMEIVENEEDLRSYMRTAVKASPDHPVLVDSYIVGQECEVDAISDGKDVLIPGIMEHIERAGVHSGDSMAVYPPQTLSQKVQETIADYTKRLAIGLHCLGMMNIQFVIKDEKVYVIEVNPRASRTVPFLSKVTNIPMAQVATKLILGQSLSELGYQNGLYPESTRVHIKAPVFSFTKLAKVDSLLGPEMKSTGEVMGSDATLEKALYKAFEASYLHLPTFGNVVFTIADDAKEEALNLARRFQNIGYGILATEGTAAFFASHGLQAQPVGKIGDDDKDIPSFVRKGRIQAIINTVGTKRTADEDGEQIRRSAIEHGVPLFTALDTANAMLKVLESRSFVTEAI</sequence>
<evidence type="ECO:0000255" key="1">
    <source>
        <dbReference type="HAMAP-Rule" id="MF_01210"/>
    </source>
</evidence>
<proteinExistence type="inferred from homology"/>